<reference key="1">
    <citation type="journal article" date="2007" name="Nat. Biotechnol.">
        <title>Genome sequence of the lignocellulose-bioconverting and xylose-fermenting yeast Pichia stipitis.</title>
        <authorList>
            <person name="Jeffries T.W."/>
            <person name="Grigoriev I.V."/>
            <person name="Grimwood J."/>
            <person name="Laplaza J.M."/>
            <person name="Aerts A."/>
            <person name="Salamov A."/>
            <person name="Schmutz J."/>
            <person name="Lindquist E."/>
            <person name="Dehal P."/>
            <person name="Shapiro H."/>
            <person name="Jin Y.-S."/>
            <person name="Passoth V."/>
            <person name="Richardson P.M."/>
        </authorList>
    </citation>
    <scope>NUCLEOTIDE SEQUENCE [LARGE SCALE GENOMIC DNA]</scope>
    <source>
        <strain>ATCC 58785 / CBS 6054 / NBRC 10063 / NRRL Y-11545</strain>
    </source>
</reference>
<evidence type="ECO:0000250" key="1"/>
<evidence type="ECO:0000250" key="2">
    <source>
        <dbReference type="UniProtKB" id="Q99278"/>
    </source>
</evidence>
<evidence type="ECO:0000256" key="3">
    <source>
        <dbReference type="SAM" id="MobiDB-lite"/>
    </source>
</evidence>
<evidence type="ECO:0000305" key="4"/>
<gene>
    <name type="primary">MED11</name>
    <name type="ORF">PICST_32479</name>
</gene>
<dbReference type="EMBL" id="CP000499">
    <property type="protein sequence ID" value="ABN66976.2"/>
    <property type="molecule type" value="Genomic_DNA"/>
</dbReference>
<dbReference type="RefSeq" id="XP_001385005.2">
    <property type="nucleotide sequence ID" value="XM_001384968.1"/>
</dbReference>
<dbReference type="SMR" id="A3LWI0"/>
<dbReference type="FunCoup" id="A3LWI0">
    <property type="interactions" value="127"/>
</dbReference>
<dbReference type="STRING" id="322104.A3LWI0"/>
<dbReference type="GeneID" id="4839263"/>
<dbReference type="KEGG" id="pic:PICST_32479"/>
<dbReference type="eggNOG" id="ENOG502S3YW">
    <property type="taxonomic scope" value="Eukaryota"/>
</dbReference>
<dbReference type="HOGENOM" id="CLU_1175810_0_0_1"/>
<dbReference type="InParanoid" id="A3LWI0"/>
<dbReference type="OrthoDB" id="5418434at2759"/>
<dbReference type="Proteomes" id="UP000002258">
    <property type="component" value="Chromosome 5"/>
</dbReference>
<dbReference type="GO" id="GO:0016592">
    <property type="term" value="C:mediator complex"/>
    <property type="evidence" value="ECO:0007669"/>
    <property type="project" value="InterPro"/>
</dbReference>
<dbReference type="GO" id="GO:0003712">
    <property type="term" value="F:transcription coregulator activity"/>
    <property type="evidence" value="ECO:0007669"/>
    <property type="project" value="InterPro"/>
</dbReference>
<dbReference type="GO" id="GO:0006357">
    <property type="term" value="P:regulation of transcription by RNA polymerase II"/>
    <property type="evidence" value="ECO:0007669"/>
    <property type="project" value="InterPro"/>
</dbReference>
<dbReference type="Gene3D" id="1.10.287.3490">
    <property type="match status" value="1"/>
</dbReference>
<dbReference type="InterPro" id="IPR019404">
    <property type="entry name" value="Mediator_Med11"/>
</dbReference>
<dbReference type="Pfam" id="PF10280">
    <property type="entry name" value="Med11"/>
    <property type="match status" value="1"/>
</dbReference>
<name>MED11_PICST</name>
<keyword id="KW-0010">Activator</keyword>
<keyword id="KW-0539">Nucleus</keyword>
<keyword id="KW-1185">Reference proteome</keyword>
<keyword id="KW-0804">Transcription</keyword>
<keyword id="KW-0805">Transcription regulation</keyword>
<proteinExistence type="inferred from homology"/>
<protein>
    <recommendedName>
        <fullName>Mediator of RNA polymerase II transcription subunit 11</fullName>
    </recommendedName>
    <alternativeName>
        <fullName>Mediator complex subunit 11</fullName>
    </alternativeName>
</protein>
<accession>A3LWI0</accession>
<organism>
    <name type="scientific">Scheffersomyces stipitis (strain ATCC 58785 / CBS 6054 / NBRC 10063 / NRRL Y-11545)</name>
    <name type="common">Yeast</name>
    <name type="synonym">Pichia stipitis</name>
    <dbReference type="NCBI Taxonomy" id="322104"/>
    <lineage>
        <taxon>Eukaryota</taxon>
        <taxon>Fungi</taxon>
        <taxon>Dikarya</taxon>
        <taxon>Ascomycota</taxon>
        <taxon>Saccharomycotina</taxon>
        <taxon>Pichiomycetes</taxon>
        <taxon>Debaryomycetaceae</taxon>
        <taxon>Scheffersomyces</taxon>
    </lineage>
</organism>
<feature type="chain" id="PRO_0000304322" description="Mediator of RNA polymerase II transcription subunit 11">
    <location>
        <begin position="1"/>
        <end position="236"/>
    </location>
</feature>
<feature type="region of interest" description="Disordered" evidence="3">
    <location>
        <begin position="136"/>
        <end position="236"/>
    </location>
</feature>
<feature type="compositionally biased region" description="Basic and acidic residues" evidence="3">
    <location>
        <begin position="136"/>
        <end position="152"/>
    </location>
</feature>
<feature type="compositionally biased region" description="Basic and acidic residues" evidence="3">
    <location>
        <begin position="168"/>
        <end position="186"/>
    </location>
</feature>
<feature type="compositionally biased region" description="Acidic residues" evidence="3">
    <location>
        <begin position="226"/>
        <end position="236"/>
    </location>
</feature>
<comment type="function">
    <text evidence="2">Component of the Mediator complex, a coactivator involved in the regulated transcription of nearly all RNA polymerase II-dependent genes. Mediator functions as a bridge to convey information from gene-specific regulatory proteins to the basal RNA polymerase II transcription machinery. Mediator is recruited to promoters by direct interactions with regulatory proteins and serves as a scaffold for the assembly of a functional pre-initiation complex with RNA polymerase II and the general transcription factors (By similarity).</text>
</comment>
<comment type="subunit">
    <text evidence="1">Component of the Mediator complex.</text>
</comment>
<comment type="subcellular location">
    <subcellularLocation>
        <location evidence="1">Nucleus</location>
    </subcellularLocation>
</comment>
<comment type="similarity">
    <text evidence="4">Belongs to the Mediator complex subunit 11 family.</text>
</comment>
<sequence>MSETFIQERLDSLYEIDCKIVSLLDNISTLFQTYSSSDGDVKESFASQTEEIYSILSKVAIDLRKEVKVMDDNIGVYDKNKDGVMILPIGVDQKNTTLGRKKLNEELKELEGLLPPVSKSNEEDISMADAEQSVEIEKNAEEDKTQVKKEAVQESITEPEKSNQSTNEETKETQPDQIESKDDIKQETPFNEINIPKESTSEPELGLGADIDIDMDNNDNNNDDNSNVDDLFEDIL</sequence>